<dbReference type="EC" id="4.2.3.3" evidence="1"/>
<dbReference type="EMBL" id="CP000868">
    <property type="protein sequence ID" value="ABX14678.1"/>
    <property type="molecule type" value="Genomic_DNA"/>
</dbReference>
<dbReference type="EMBL" id="AP009385">
    <property type="protein sequence ID" value="BAG44172.1"/>
    <property type="molecule type" value="Genomic_DNA"/>
</dbReference>
<dbReference type="RefSeq" id="WP_006398748.1">
    <property type="nucleotide sequence ID" value="NC_010804.1"/>
</dbReference>
<dbReference type="SMR" id="A9AJK3"/>
<dbReference type="STRING" id="395019.BMULJ_02277"/>
<dbReference type="KEGG" id="bmj:BMULJ_02277"/>
<dbReference type="KEGG" id="bmu:Bmul_0987"/>
<dbReference type="eggNOG" id="COG1803">
    <property type="taxonomic scope" value="Bacteria"/>
</dbReference>
<dbReference type="HOGENOM" id="CLU_120420_1_0_4"/>
<dbReference type="Proteomes" id="UP000008815">
    <property type="component" value="Chromosome 1"/>
</dbReference>
<dbReference type="GO" id="GO:0005829">
    <property type="term" value="C:cytosol"/>
    <property type="evidence" value="ECO:0007669"/>
    <property type="project" value="TreeGrafter"/>
</dbReference>
<dbReference type="GO" id="GO:0008929">
    <property type="term" value="F:methylglyoxal synthase activity"/>
    <property type="evidence" value="ECO:0007669"/>
    <property type="project" value="UniProtKB-UniRule"/>
</dbReference>
<dbReference type="GO" id="GO:0019242">
    <property type="term" value="P:methylglyoxal biosynthetic process"/>
    <property type="evidence" value="ECO:0007669"/>
    <property type="project" value="UniProtKB-UniRule"/>
</dbReference>
<dbReference type="CDD" id="cd01422">
    <property type="entry name" value="MGS"/>
    <property type="match status" value="1"/>
</dbReference>
<dbReference type="Gene3D" id="3.40.50.1380">
    <property type="entry name" value="Methylglyoxal synthase-like domain"/>
    <property type="match status" value="1"/>
</dbReference>
<dbReference type="HAMAP" id="MF_00549">
    <property type="entry name" value="Methylglyoxal_synth"/>
    <property type="match status" value="1"/>
</dbReference>
<dbReference type="InterPro" id="IPR004363">
    <property type="entry name" value="Methylgl_synth"/>
</dbReference>
<dbReference type="InterPro" id="IPR018148">
    <property type="entry name" value="Methylglyoxal_synth_AS"/>
</dbReference>
<dbReference type="InterPro" id="IPR011607">
    <property type="entry name" value="MGS-like_dom"/>
</dbReference>
<dbReference type="InterPro" id="IPR036914">
    <property type="entry name" value="MGS-like_dom_sf"/>
</dbReference>
<dbReference type="NCBIfam" id="TIGR00160">
    <property type="entry name" value="MGSA"/>
    <property type="match status" value="1"/>
</dbReference>
<dbReference type="NCBIfam" id="NF003559">
    <property type="entry name" value="PRK05234.1"/>
    <property type="match status" value="1"/>
</dbReference>
<dbReference type="PANTHER" id="PTHR30492">
    <property type="entry name" value="METHYLGLYOXAL SYNTHASE"/>
    <property type="match status" value="1"/>
</dbReference>
<dbReference type="PANTHER" id="PTHR30492:SF0">
    <property type="entry name" value="METHYLGLYOXAL SYNTHASE"/>
    <property type="match status" value="1"/>
</dbReference>
<dbReference type="Pfam" id="PF02142">
    <property type="entry name" value="MGS"/>
    <property type="match status" value="1"/>
</dbReference>
<dbReference type="PIRSF" id="PIRSF006614">
    <property type="entry name" value="Methylglyox_syn"/>
    <property type="match status" value="1"/>
</dbReference>
<dbReference type="SMART" id="SM00851">
    <property type="entry name" value="MGS"/>
    <property type="match status" value="1"/>
</dbReference>
<dbReference type="SUPFAM" id="SSF52335">
    <property type="entry name" value="Methylglyoxal synthase-like"/>
    <property type="match status" value="1"/>
</dbReference>
<dbReference type="PROSITE" id="PS01335">
    <property type="entry name" value="METHYLGLYOXAL_SYNTH"/>
    <property type="match status" value="1"/>
</dbReference>
<dbReference type="PROSITE" id="PS51855">
    <property type="entry name" value="MGS"/>
    <property type="match status" value="1"/>
</dbReference>
<name>MGSA_BURM1</name>
<comment type="function">
    <text evidence="1">Catalyzes the formation of methylglyoxal from dihydroxyacetone phosphate.</text>
</comment>
<comment type="catalytic activity">
    <reaction evidence="1">
        <text>dihydroxyacetone phosphate = methylglyoxal + phosphate</text>
        <dbReference type="Rhea" id="RHEA:17937"/>
        <dbReference type="ChEBI" id="CHEBI:17158"/>
        <dbReference type="ChEBI" id="CHEBI:43474"/>
        <dbReference type="ChEBI" id="CHEBI:57642"/>
        <dbReference type="EC" id="4.2.3.3"/>
    </reaction>
</comment>
<comment type="similarity">
    <text evidence="1">Belongs to the methylglyoxal synthase family.</text>
</comment>
<accession>A9AJK3</accession>
<organism>
    <name type="scientific">Burkholderia multivorans (strain ATCC 17616 / 249)</name>
    <dbReference type="NCBI Taxonomy" id="395019"/>
    <lineage>
        <taxon>Bacteria</taxon>
        <taxon>Pseudomonadati</taxon>
        <taxon>Pseudomonadota</taxon>
        <taxon>Betaproteobacteria</taxon>
        <taxon>Burkholderiales</taxon>
        <taxon>Burkholderiaceae</taxon>
        <taxon>Burkholderia</taxon>
        <taxon>Burkholderia cepacia complex</taxon>
    </lineage>
</organism>
<keyword id="KW-0456">Lyase</keyword>
<keyword id="KW-1185">Reference proteome</keyword>
<feature type="chain" id="PRO_1000128983" description="Methylglyoxal synthase">
    <location>
        <begin position="1"/>
        <end position="130"/>
    </location>
</feature>
<feature type="domain" description="MGS-like" evidence="1">
    <location>
        <begin position="1"/>
        <end position="130"/>
    </location>
</feature>
<feature type="active site" description="Proton donor/acceptor" evidence="1">
    <location>
        <position position="63"/>
    </location>
</feature>
<feature type="binding site" evidence="1">
    <location>
        <position position="11"/>
    </location>
    <ligand>
        <name>substrate</name>
    </ligand>
</feature>
<feature type="binding site" evidence="1">
    <location>
        <position position="15"/>
    </location>
    <ligand>
        <name>substrate</name>
    </ligand>
</feature>
<feature type="binding site" evidence="1">
    <location>
        <begin position="37"/>
        <end position="40"/>
    </location>
    <ligand>
        <name>substrate</name>
    </ligand>
</feature>
<feature type="binding site" evidence="1">
    <location>
        <begin position="57"/>
        <end position="58"/>
    </location>
    <ligand>
        <name>substrate</name>
    </ligand>
</feature>
<feature type="binding site" evidence="1">
    <location>
        <position position="90"/>
    </location>
    <ligand>
        <name>substrate</name>
    </ligand>
</feature>
<protein>
    <recommendedName>
        <fullName evidence="1">Methylglyoxal synthase</fullName>
        <shortName evidence="1">MGS</shortName>
        <ecNumber evidence="1">4.2.3.3</ecNumber>
    </recommendedName>
</protein>
<sequence>MSKPRIALIAHDAKKDEIVALAGQYRAVLAQCRLVATGTTGGRIAAAHGLEVERKLSGPLGGDLQIGAELADGRVDVVVFLRDPMTAQPHDPDITALVRACDVHNVPVATNVATARMLLDDLARTMQDVC</sequence>
<reference key="1">
    <citation type="submission" date="2007-10" db="EMBL/GenBank/DDBJ databases">
        <title>Complete sequence of chromosome 1 of Burkholderia multivorans ATCC 17616.</title>
        <authorList>
            <person name="Copeland A."/>
            <person name="Lucas S."/>
            <person name="Lapidus A."/>
            <person name="Barry K."/>
            <person name="Glavina del Rio T."/>
            <person name="Dalin E."/>
            <person name="Tice H."/>
            <person name="Pitluck S."/>
            <person name="Chain P."/>
            <person name="Malfatti S."/>
            <person name="Shin M."/>
            <person name="Vergez L."/>
            <person name="Schmutz J."/>
            <person name="Larimer F."/>
            <person name="Land M."/>
            <person name="Hauser L."/>
            <person name="Kyrpides N."/>
            <person name="Kim E."/>
            <person name="Tiedje J."/>
            <person name="Richardson P."/>
        </authorList>
    </citation>
    <scope>NUCLEOTIDE SEQUENCE [LARGE SCALE GENOMIC DNA]</scope>
    <source>
        <strain>ATCC 17616 / 249</strain>
    </source>
</reference>
<reference key="2">
    <citation type="submission" date="2007-04" db="EMBL/GenBank/DDBJ databases">
        <title>Complete genome sequence of Burkholderia multivorans ATCC 17616.</title>
        <authorList>
            <person name="Ohtsubo Y."/>
            <person name="Yamashita A."/>
            <person name="Kurokawa K."/>
            <person name="Takami H."/>
            <person name="Yuhara S."/>
            <person name="Nishiyama E."/>
            <person name="Endo R."/>
            <person name="Miyazaki R."/>
            <person name="Ono A."/>
            <person name="Yano K."/>
            <person name="Ito M."/>
            <person name="Sota M."/>
            <person name="Yuji N."/>
            <person name="Hattori M."/>
            <person name="Tsuda M."/>
        </authorList>
    </citation>
    <scope>NUCLEOTIDE SEQUENCE [LARGE SCALE GENOMIC DNA]</scope>
    <source>
        <strain>ATCC 17616 / 249</strain>
    </source>
</reference>
<gene>
    <name evidence="1" type="primary">mgsA</name>
    <name type="ordered locus">Bmul_0987</name>
    <name type="ordered locus">BMULJ_02277</name>
</gene>
<evidence type="ECO:0000255" key="1">
    <source>
        <dbReference type="HAMAP-Rule" id="MF_00549"/>
    </source>
</evidence>
<proteinExistence type="inferred from homology"/>